<reference key="1">
    <citation type="journal article" date="2008" name="BMC Genomics">
        <title>Complete genome of Phenylobacterium zucineum - a novel facultative intracellular bacterium isolated from human erythroleukemia cell line K562.</title>
        <authorList>
            <person name="Luo Y."/>
            <person name="Xu X."/>
            <person name="Ding Z."/>
            <person name="Liu Z."/>
            <person name="Zhang B."/>
            <person name="Yan Z."/>
            <person name="Sun J."/>
            <person name="Hu S."/>
            <person name="Hu X."/>
        </authorList>
    </citation>
    <scope>NUCLEOTIDE SEQUENCE [LARGE SCALE GENOMIC DNA]</scope>
    <source>
        <strain>HLK1</strain>
    </source>
</reference>
<feature type="chain" id="PRO_1000129357" description="Ribonuclease PH">
    <location>
        <begin position="1"/>
        <end position="238"/>
    </location>
</feature>
<feature type="binding site" evidence="1">
    <location>
        <position position="86"/>
    </location>
    <ligand>
        <name>phosphate</name>
        <dbReference type="ChEBI" id="CHEBI:43474"/>
        <note>substrate</note>
    </ligand>
</feature>
<feature type="binding site" evidence="1">
    <location>
        <begin position="124"/>
        <end position="126"/>
    </location>
    <ligand>
        <name>phosphate</name>
        <dbReference type="ChEBI" id="CHEBI:43474"/>
        <note>substrate</note>
    </ligand>
</feature>
<keyword id="KW-0548">Nucleotidyltransferase</keyword>
<keyword id="KW-1185">Reference proteome</keyword>
<keyword id="KW-0694">RNA-binding</keyword>
<keyword id="KW-0698">rRNA processing</keyword>
<keyword id="KW-0808">Transferase</keyword>
<keyword id="KW-0819">tRNA processing</keyword>
<keyword id="KW-0820">tRNA-binding</keyword>
<organism>
    <name type="scientific">Phenylobacterium zucineum (strain HLK1)</name>
    <dbReference type="NCBI Taxonomy" id="450851"/>
    <lineage>
        <taxon>Bacteria</taxon>
        <taxon>Pseudomonadati</taxon>
        <taxon>Pseudomonadota</taxon>
        <taxon>Alphaproteobacteria</taxon>
        <taxon>Caulobacterales</taxon>
        <taxon>Caulobacteraceae</taxon>
        <taxon>Phenylobacterium</taxon>
    </lineage>
</organism>
<gene>
    <name evidence="1" type="primary">rph</name>
    <name type="ordered locus">PHZ_c3471</name>
</gene>
<name>RNPH_PHEZH</name>
<protein>
    <recommendedName>
        <fullName evidence="1">Ribonuclease PH</fullName>
        <shortName evidence="1">RNase PH</shortName>
        <ecNumber evidence="1">2.7.7.56</ecNumber>
    </recommendedName>
    <alternativeName>
        <fullName evidence="1">tRNA nucleotidyltransferase</fullName>
    </alternativeName>
</protein>
<proteinExistence type="inferred from homology"/>
<accession>B4RC87</accession>
<evidence type="ECO:0000255" key="1">
    <source>
        <dbReference type="HAMAP-Rule" id="MF_00564"/>
    </source>
</evidence>
<dbReference type="EC" id="2.7.7.56" evidence="1"/>
<dbReference type="EMBL" id="CP000747">
    <property type="protein sequence ID" value="ACG79880.1"/>
    <property type="molecule type" value="Genomic_DNA"/>
</dbReference>
<dbReference type="RefSeq" id="WP_012524018.1">
    <property type="nucleotide sequence ID" value="NC_011144.1"/>
</dbReference>
<dbReference type="SMR" id="B4RC87"/>
<dbReference type="STRING" id="450851.PHZ_c3471"/>
<dbReference type="KEGG" id="pzu:PHZ_c3471"/>
<dbReference type="eggNOG" id="COG0689">
    <property type="taxonomic scope" value="Bacteria"/>
</dbReference>
<dbReference type="HOGENOM" id="CLU_050858_0_0_5"/>
<dbReference type="OrthoDB" id="9802265at2"/>
<dbReference type="Proteomes" id="UP000001868">
    <property type="component" value="Chromosome"/>
</dbReference>
<dbReference type="GO" id="GO:0000175">
    <property type="term" value="F:3'-5'-RNA exonuclease activity"/>
    <property type="evidence" value="ECO:0007669"/>
    <property type="project" value="UniProtKB-UniRule"/>
</dbReference>
<dbReference type="GO" id="GO:0000049">
    <property type="term" value="F:tRNA binding"/>
    <property type="evidence" value="ECO:0007669"/>
    <property type="project" value="UniProtKB-UniRule"/>
</dbReference>
<dbReference type="GO" id="GO:0009022">
    <property type="term" value="F:tRNA nucleotidyltransferase activity"/>
    <property type="evidence" value="ECO:0007669"/>
    <property type="project" value="UniProtKB-UniRule"/>
</dbReference>
<dbReference type="GO" id="GO:0016075">
    <property type="term" value="P:rRNA catabolic process"/>
    <property type="evidence" value="ECO:0007669"/>
    <property type="project" value="UniProtKB-UniRule"/>
</dbReference>
<dbReference type="GO" id="GO:0006364">
    <property type="term" value="P:rRNA processing"/>
    <property type="evidence" value="ECO:0007669"/>
    <property type="project" value="UniProtKB-KW"/>
</dbReference>
<dbReference type="GO" id="GO:0008033">
    <property type="term" value="P:tRNA processing"/>
    <property type="evidence" value="ECO:0007669"/>
    <property type="project" value="UniProtKB-UniRule"/>
</dbReference>
<dbReference type="CDD" id="cd11362">
    <property type="entry name" value="RNase_PH_bact"/>
    <property type="match status" value="1"/>
</dbReference>
<dbReference type="FunFam" id="3.30.230.70:FF:000003">
    <property type="entry name" value="Ribonuclease PH"/>
    <property type="match status" value="1"/>
</dbReference>
<dbReference type="Gene3D" id="3.30.230.70">
    <property type="entry name" value="GHMP Kinase, N-terminal domain"/>
    <property type="match status" value="1"/>
</dbReference>
<dbReference type="HAMAP" id="MF_00564">
    <property type="entry name" value="RNase_PH"/>
    <property type="match status" value="1"/>
</dbReference>
<dbReference type="InterPro" id="IPR001247">
    <property type="entry name" value="ExoRNase_PH_dom1"/>
</dbReference>
<dbReference type="InterPro" id="IPR015847">
    <property type="entry name" value="ExoRNase_PH_dom2"/>
</dbReference>
<dbReference type="InterPro" id="IPR036345">
    <property type="entry name" value="ExoRNase_PH_dom2_sf"/>
</dbReference>
<dbReference type="InterPro" id="IPR027408">
    <property type="entry name" value="PNPase/RNase_PH_dom_sf"/>
</dbReference>
<dbReference type="InterPro" id="IPR020568">
    <property type="entry name" value="Ribosomal_Su5_D2-typ_SF"/>
</dbReference>
<dbReference type="InterPro" id="IPR050080">
    <property type="entry name" value="RNase_PH"/>
</dbReference>
<dbReference type="InterPro" id="IPR002381">
    <property type="entry name" value="RNase_PH_bac-type"/>
</dbReference>
<dbReference type="InterPro" id="IPR018336">
    <property type="entry name" value="RNase_PH_CS"/>
</dbReference>
<dbReference type="NCBIfam" id="TIGR01966">
    <property type="entry name" value="RNasePH"/>
    <property type="match status" value="1"/>
</dbReference>
<dbReference type="PANTHER" id="PTHR11953">
    <property type="entry name" value="EXOSOME COMPLEX COMPONENT"/>
    <property type="match status" value="1"/>
</dbReference>
<dbReference type="PANTHER" id="PTHR11953:SF0">
    <property type="entry name" value="EXOSOME COMPLEX COMPONENT RRP41"/>
    <property type="match status" value="1"/>
</dbReference>
<dbReference type="Pfam" id="PF01138">
    <property type="entry name" value="RNase_PH"/>
    <property type="match status" value="1"/>
</dbReference>
<dbReference type="Pfam" id="PF03725">
    <property type="entry name" value="RNase_PH_C"/>
    <property type="match status" value="1"/>
</dbReference>
<dbReference type="SUPFAM" id="SSF55666">
    <property type="entry name" value="Ribonuclease PH domain 2-like"/>
    <property type="match status" value="1"/>
</dbReference>
<dbReference type="SUPFAM" id="SSF54211">
    <property type="entry name" value="Ribosomal protein S5 domain 2-like"/>
    <property type="match status" value="1"/>
</dbReference>
<dbReference type="PROSITE" id="PS01277">
    <property type="entry name" value="RIBONUCLEASE_PH"/>
    <property type="match status" value="1"/>
</dbReference>
<comment type="function">
    <text evidence="1">Phosphorolytic 3'-5' exoribonuclease that plays an important role in tRNA 3'-end maturation. Removes nucleotide residues following the 3'-CCA terminus of tRNAs; can also add nucleotides to the ends of RNA molecules by using nucleoside diphosphates as substrates, but this may not be physiologically important. Probably plays a role in initiation of 16S rRNA degradation (leading to ribosome degradation) during starvation.</text>
</comment>
<comment type="catalytic activity">
    <reaction evidence="1">
        <text>tRNA(n+1) + phosphate = tRNA(n) + a ribonucleoside 5'-diphosphate</text>
        <dbReference type="Rhea" id="RHEA:10628"/>
        <dbReference type="Rhea" id="RHEA-COMP:17343"/>
        <dbReference type="Rhea" id="RHEA-COMP:17344"/>
        <dbReference type="ChEBI" id="CHEBI:43474"/>
        <dbReference type="ChEBI" id="CHEBI:57930"/>
        <dbReference type="ChEBI" id="CHEBI:173114"/>
        <dbReference type="EC" id="2.7.7.56"/>
    </reaction>
</comment>
<comment type="subunit">
    <text evidence="1">Homohexameric ring arranged as a trimer of dimers.</text>
</comment>
<comment type="similarity">
    <text evidence="1">Belongs to the RNase PH family.</text>
</comment>
<sequence>MRPSDRRPDLLRPVTLETGVNRYAEGSCLASFGHTKVLVTASLEEGVPPFLRGKGQGWVTAEYGMLPRATHTRGRREAAQGKQSGRTQEIQRLIGRSLRAVVDLKALGERQITVDCDVVQADGGTRTAAITGAWVALRLATRYLLEEGVIATDPILDQVAAISCGVFSGTPVLDLDYEEDSNAEADANFVLTGAGDIVEIQATGEKRGFSEAEFEALFALARKGIGELCELQRAATGG</sequence>